<reference key="1">
    <citation type="journal article" date="2008" name="DNA Res.">
        <title>Complete genome sequence and comparative analysis of the wild-type commensal Escherichia coli strain SE11 isolated from a healthy adult.</title>
        <authorList>
            <person name="Oshima K."/>
            <person name="Toh H."/>
            <person name="Ogura Y."/>
            <person name="Sasamoto H."/>
            <person name="Morita H."/>
            <person name="Park S.-H."/>
            <person name="Ooka T."/>
            <person name="Iyoda S."/>
            <person name="Taylor T.D."/>
            <person name="Hayashi T."/>
            <person name="Itoh K."/>
            <person name="Hattori M."/>
        </authorList>
    </citation>
    <scope>NUCLEOTIDE SEQUENCE [LARGE SCALE GENOMIC DNA]</scope>
    <source>
        <strain>SE11</strain>
    </source>
</reference>
<dbReference type="EMBL" id="AP009240">
    <property type="protein sequence ID" value="BAG78918.1"/>
    <property type="molecule type" value="Genomic_DNA"/>
</dbReference>
<dbReference type="SMR" id="B6I485"/>
<dbReference type="KEGG" id="ecy:ECSE_3394"/>
<dbReference type="HOGENOM" id="CLU_051840_0_0_6"/>
<dbReference type="Proteomes" id="UP000008199">
    <property type="component" value="Chromosome"/>
</dbReference>
<dbReference type="GO" id="GO:0080146">
    <property type="term" value="F:L-cysteine desulfhydrase activity"/>
    <property type="evidence" value="ECO:0007669"/>
    <property type="project" value="TreeGrafter"/>
</dbReference>
<dbReference type="GO" id="GO:0019450">
    <property type="term" value="P:L-cysteine catabolic process to pyruvate"/>
    <property type="evidence" value="ECO:0007669"/>
    <property type="project" value="TreeGrafter"/>
</dbReference>
<dbReference type="HAMAP" id="MF_01845">
    <property type="entry name" value="UPF0597"/>
    <property type="match status" value="1"/>
</dbReference>
<dbReference type="InterPro" id="IPR005130">
    <property type="entry name" value="Ser_deHydtase-like_asu"/>
</dbReference>
<dbReference type="InterPro" id="IPR021144">
    <property type="entry name" value="UPF0597"/>
</dbReference>
<dbReference type="PANTHER" id="PTHR30501">
    <property type="entry name" value="UPF0597 PROTEIN YHAM"/>
    <property type="match status" value="1"/>
</dbReference>
<dbReference type="PANTHER" id="PTHR30501:SF2">
    <property type="entry name" value="UPF0597 PROTEIN YHAM"/>
    <property type="match status" value="1"/>
</dbReference>
<dbReference type="Pfam" id="PF03313">
    <property type="entry name" value="SDH_alpha"/>
    <property type="match status" value="1"/>
</dbReference>
<dbReference type="PIRSF" id="PIRSF006054">
    <property type="entry name" value="UCP006054"/>
    <property type="match status" value="1"/>
</dbReference>
<organism>
    <name type="scientific">Escherichia coli (strain SE11)</name>
    <dbReference type="NCBI Taxonomy" id="409438"/>
    <lineage>
        <taxon>Bacteria</taxon>
        <taxon>Pseudomonadati</taxon>
        <taxon>Pseudomonadota</taxon>
        <taxon>Gammaproteobacteria</taxon>
        <taxon>Enterobacterales</taxon>
        <taxon>Enterobacteriaceae</taxon>
        <taxon>Escherichia</taxon>
    </lineage>
</organism>
<evidence type="ECO:0000255" key="1">
    <source>
        <dbReference type="HAMAP-Rule" id="MF_01845"/>
    </source>
</evidence>
<protein>
    <recommendedName>
        <fullName evidence="1">UPF0597 protein YhaM</fullName>
    </recommendedName>
</protein>
<feature type="chain" id="PRO_1000188459" description="UPF0597 protein YhaM">
    <location>
        <begin position="1"/>
        <end position="436"/>
    </location>
</feature>
<accession>B6I485</accession>
<sequence length="436" mass="45360">MFDSTLNPLWQRYILAVQEEVKPALGCTEPISLALAAAVAAAELEGPVERVEAWVSPNLMKNGLGVTVPGTGMVGLPIAAALGALGGNANAGLEVLKDATAQAIADAKALLAAGKVSVKIQEPCNEILFSRAKVWNGEKWACVTIVGGHTNIVHIETHDGVVFTQQACVAEGEQESPLTVLSRTTLAEILKFVNEVPFAAIRFILDSAKLNCALSQEGLSGKWGLHIGATLEKQCERGLLAKDLSSSIVIRTSAASDARMGGATLPAMSNSGSGNQGITATMPVVVVAEHFGADDERLARALMLSHLSAIYIHNQLPRLSALCAATTAAMGAAAGMAWLVDGRYETISMAISSMIGDVSGMICDGASNSCAMKVSTSASAAWKAVLMALDDTAVTGNEGIVAHDVEQSIANLCALASHSMQQTDRQIIEIMASKAR</sequence>
<comment type="similarity">
    <text evidence="1">Belongs to the UPF0597 family.</text>
</comment>
<gene>
    <name evidence="1" type="primary">yhaM</name>
    <name type="ordered locus">ECSE_3394</name>
</gene>
<name>YHAM_ECOSE</name>
<proteinExistence type="inferred from homology"/>